<organism>
    <name type="scientific">Treponema pallidum (strain Nichols)</name>
    <dbReference type="NCBI Taxonomy" id="243276"/>
    <lineage>
        <taxon>Bacteria</taxon>
        <taxon>Pseudomonadati</taxon>
        <taxon>Spirochaetota</taxon>
        <taxon>Spirochaetia</taxon>
        <taxon>Spirochaetales</taxon>
        <taxon>Treponemataceae</taxon>
        <taxon>Treponema</taxon>
    </lineage>
</organism>
<sequence>MIQTLVLRDTPRLESCRRGGFAMKFSTRCLRLVLCASAVALSAQDASDTAGRVLEPPPPGLTESNSSRMYYVNLPVVKVFSHRLGYRVIYRRANFEMAEIYLPSAWFSPRVGKALLRHAPVRVDPYLSFFMEGNTLTYVKLTLPRSLSSPVWGTLKSPSEYDDKFDVQFQSPEFSS</sequence>
<protein>
    <recommendedName>
        <fullName>Uncharacterized protein TP_0437</fullName>
    </recommendedName>
</protein>
<dbReference type="EMBL" id="AE000520">
    <property type="protein sequence ID" value="AAC65435.1"/>
    <property type="molecule type" value="Genomic_DNA"/>
</dbReference>
<dbReference type="PIR" id="E71323">
    <property type="entry name" value="E71323"/>
</dbReference>
<dbReference type="IntAct" id="O83451">
    <property type="interactions" value="2"/>
</dbReference>
<dbReference type="STRING" id="243276.TP_0437"/>
<dbReference type="EnsemblBacteria" id="AAC65435">
    <property type="protein sequence ID" value="AAC65435"/>
    <property type="gene ID" value="TP_0437"/>
</dbReference>
<dbReference type="KEGG" id="tpa:TP_0437"/>
<dbReference type="KEGG" id="tpw:TPANIC_0437"/>
<dbReference type="eggNOG" id="ENOG502ZYHU">
    <property type="taxonomic scope" value="Bacteria"/>
</dbReference>
<dbReference type="HOGENOM" id="CLU_143566_1_0_12"/>
<dbReference type="OrthoDB" id="360148at2"/>
<dbReference type="Proteomes" id="UP000000811">
    <property type="component" value="Chromosome"/>
</dbReference>
<accession>O83451</accession>
<reference key="1">
    <citation type="journal article" date="1998" name="Science">
        <title>Complete genome sequence of Treponema pallidum, the syphilis spirochete.</title>
        <authorList>
            <person name="Fraser C.M."/>
            <person name="Norris S.J."/>
            <person name="Weinstock G.M."/>
            <person name="White O."/>
            <person name="Sutton G.G."/>
            <person name="Dodson R.J."/>
            <person name="Gwinn M.L."/>
            <person name="Hickey E.K."/>
            <person name="Clayton R.A."/>
            <person name="Ketchum K.A."/>
            <person name="Sodergren E."/>
            <person name="Hardham J.M."/>
            <person name="McLeod M.P."/>
            <person name="Salzberg S.L."/>
            <person name="Peterson J.D."/>
            <person name="Khalak H.G."/>
            <person name="Richardson D.L."/>
            <person name="Howell J.K."/>
            <person name="Chidambaram M."/>
            <person name="Utterback T.R."/>
            <person name="McDonald L.A."/>
            <person name="Artiach P."/>
            <person name="Bowman C."/>
            <person name="Cotton M.D."/>
            <person name="Fujii C."/>
            <person name="Garland S.A."/>
            <person name="Hatch B."/>
            <person name="Horst K."/>
            <person name="Roberts K.M."/>
            <person name="Sandusky M."/>
            <person name="Weidman J.F."/>
            <person name="Smith H.O."/>
            <person name="Venter J.C."/>
        </authorList>
    </citation>
    <scope>NUCLEOTIDE SEQUENCE [LARGE SCALE GENOMIC DNA]</scope>
    <source>
        <strain>Nichols</strain>
    </source>
</reference>
<gene>
    <name type="ordered locus">TP_0437</name>
</gene>
<keyword id="KW-1185">Reference proteome</keyword>
<name>Y437_TREPA</name>
<proteinExistence type="predicted"/>
<feature type="chain" id="PRO_0000202255" description="Uncharacterized protein TP_0437">
    <location>
        <begin position="1"/>
        <end position="176"/>
    </location>
</feature>